<protein>
    <recommendedName>
        <fullName>Chalcone synthase</fullName>
        <ecNumber>2.3.1.74</ecNumber>
    </recommendedName>
    <alternativeName>
        <fullName>Naringenin-chalcone synthase</fullName>
    </alternativeName>
</protein>
<sequence>ITHLIVCTTSVDMPGADYQLTKLLGLRPYVKRYMMYQQGCFAGGTVLRLAKDLAENNKGARVLVVCSEVTAVTFRGPSDTHLDSLVGQALFGDGAAALIVGSDPVPEIEKPIFEMVWTAQTIAPDSEGAIDGHLREAGLTFHLLKDVPGIVSKNINKALVEAFEPLGISDYNSIFWIAHPGGPAILDQVEQKLALKPEKMKATREVLSEYGNMSSACVLFILDEMRKKSAQDGLKTTGEGLEWGVLFGFGPGLTIETVVLRSVTI</sequence>
<proteinExistence type="evidence at transcript level"/>
<reference key="1">
    <citation type="journal article" date="1993" name="Mol. Plant Microbe Interact.">
        <title>Pathological and molecular characterizations of alfalfa interactions with compatible and incompatible bacteria, Xanthomonas campestris pv. alfalfae and Pseudomonas syringae pv. pisi.</title>
        <authorList>
            <person name="Esnault R."/>
            <person name="Buffard D."/>
            <person name="Breda C."/>
            <person name="Sallaud C."/>
            <person name="El-Turk J."/>
            <person name="Kondorosi A."/>
        </authorList>
    </citation>
    <scope>NUCLEOTIDE SEQUENCE [MRNA]</scope>
    <source>
        <strain>cv. Nagyszenasi</strain>
        <tissue>Leaf</tissue>
    </source>
</reference>
<keyword id="KW-0012">Acyltransferase</keyword>
<keyword id="KW-0284">Flavonoid biosynthesis</keyword>
<keyword id="KW-0808">Transferase</keyword>
<evidence type="ECO:0000255" key="1">
    <source>
        <dbReference type="PROSITE-ProRule" id="PRU10023"/>
    </source>
</evidence>
<evidence type="ECO:0000305" key="2"/>
<accession>P51080</accession>
<feature type="chain" id="PRO_0000216012" description="Chalcone synthase">
    <location>
        <begin position="1" status="less than"/>
        <end position="265"/>
    </location>
</feature>
<feature type="active site" evidence="1">
    <location>
        <position position="40"/>
    </location>
</feature>
<feature type="non-terminal residue">
    <location>
        <position position="1"/>
    </location>
</feature>
<gene>
    <name type="primary">CHSII</name>
</gene>
<dbReference type="EC" id="2.3.1.74"/>
<dbReference type="EMBL" id="X68107">
    <property type="protein sequence ID" value="CAA48227.1"/>
    <property type="molecule type" value="mRNA"/>
</dbReference>
<dbReference type="PIR" id="S26415">
    <property type="entry name" value="S26415"/>
</dbReference>
<dbReference type="SMR" id="P51080"/>
<dbReference type="UniPathway" id="UPA00154"/>
<dbReference type="GO" id="GO:0016210">
    <property type="term" value="F:naringenin-chalcone synthase activity"/>
    <property type="evidence" value="ECO:0007669"/>
    <property type="project" value="UniProtKB-EC"/>
</dbReference>
<dbReference type="GO" id="GO:0009813">
    <property type="term" value="P:flavonoid biosynthetic process"/>
    <property type="evidence" value="ECO:0007669"/>
    <property type="project" value="UniProtKB-UniPathway"/>
</dbReference>
<dbReference type="GO" id="GO:0030639">
    <property type="term" value="P:polyketide biosynthetic process"/>
    <property type="evidence" value="ECO:0007669"/>
    <property type="project" value="TreeGrafter"/>
</dbReference>
<dbReference type="CDD" id="cd00831">
    <property type="entry name" value="CHS_like"/>
    <property type="match status" value="1"/>
</dbReference>
<dbReference type="FunFam" id="3.40.47.10:FF:000014">
    <property type="entry name" value="Chalcone synthase 1"/>
    <property type="match status" value="1"/>
</dbReference>
<dbReference type="FunFam" id="3.40.47.10:FF:000025">
    <property type="entry name" value="Chalcone synthase 2"/>
    <property type="match status" value="1"/>
</dbReference>
<dbReference type="Gene3D" id="3.40.47.10">
    <property type="match status" value="2"/>
</dbReference>
<dbReference type="InterPro" id="IPR012328">
    <property type="entry name" value="Chalcone/stilbene_synt_C"/>
</dbReference>
<dbReference type="InterPro" id="IPR001099">
    <property type="entry name" value="Chalcone/stilbene_synt_N"/>
</dbReference>
<dbReference type="InterPro" id="IPR018088">
    <property type="entry name" value="Chalcone/stilbene_synthase_AS"/>
</dbReference>
<dbReference type="InterPro" id="IPR011141">
    <property type="entry name" value="Polyketide_synthase_type-III"/>
</dbReference>
<dbReference type="InterPro" id="IPR016039">
    <property type="entry name" value="Thiolase-like"/>
</dbReference>
<dbReference type="PANTHER" id="PTHR11877:SF62">
    <property type="entry name" value="CHALCONE SYNTHASE 7"/>
    <property type="match status" value="1"/>
</dbReference>
<dbReference type="PANTHER" id="PTHR11877">
    <property type="entry name" value="HYDROXYMETHYLGLUTARYL-COA SYNTHASE"/>
    <property type="match status" value="1"/>
</dbReference>
<dbReference type="Pfam" id="PF02797">
    <property type="entry name" value="Chal_sti_synt_C"/>
    <property type="match status" value="1"/>
</dbReference>
<dbReference type="Pfam" id="PF00195">
    <property type="entry name" value="Chal_sti_synt_N"/>
    <property type="match status" value="1"/>
</dbReference>
<dbReference type="SUPFAM" id="SSF53901">
    <property type="entry name" value="Thiolase-like"/>
    <property type="match status" value="2"/>
</dbReference>
<dbReference type="PROSITE" id="PS00441">
    <property type="entry name" value="CHALCONE_SYNTH"/>
    <property type="match status" value="1"/>
</dbReference>
<comment type="function">
    <text>The primary product of this enzyme is 4,2',4',6'-tetrahydroxychalcone (also termed naringenin-chalcone or chalcone) which can under specific conditions spontaneously isomerize into naringenin.</text>
</comment>
<comment type="catalytic activity">
    <reaction evidence="1">
        <text>(E)-4-coumaroyl-CoA + 3 malonyl-CoA + 3 H(+) = 2',4,4',6'-tetrahydroxychalcone + 3 CO2 + 4 CoA</text>
        <dbReference type="Rhea" id="RHEA:11128"/>
        <dbReference type="ChEBI" id="CHEBI:15378"/>
        <dbReference type="ChEBI" id="CHEBI:15413"/>
        <dbReference type="ChEBI" id="CHEBI:16526"/>
        <dbReference type="ChEBI" id="CHEBI:57287"/>
        <dbReference type="ChEBI" id="CHEBI:57384"/>
        <dbReference type="ChEBI" id="CHEBI:85008"/>
        <dbReference type="EC" id="2.3.1.74"/>
    </reaction>
</comment>
<comment type="pathway">
    <text>Secondary metabolite biosynthesis; flavonoid biosynthesis.</text>
</comment>
<comment type="induction">
    <text>By infection.</text>
</comment>
<comment type="similarity">
    <text evidence="2">Belongs to the thiolase-like superfamily. Chalcone/stilbene synthases family.</text>
</comment>
<name>CHS7_MEDSA</name>
<organism>
    <name type="scientific">Medicago sativa</name>
    <name type="common">Alfalfa</name>
    <dbReference type="NCBI Taxonomy" id="3879"/>
    <lineage>
        <taxon>Eukaryota</taxon>
        <taxon>Viridiplantae</taxon>
        <taxon>Streptophyta</taxon>
        <taxon>Embryophyta</taxon>
        <taxon>Tracheophyta</taxon>
        <taxon>Spermatophyta</taxon>
        <taxon>Magnoliopsida</taxon>
        <taxon>eudicotyledons</taxon>
        <taxon>Gunneridae</taxon>
        <taxon>Pentapetalae</taxon>
        <taxon>rosids</taxon>
        <taxon>fabids</taxon>
        <taxon>Fabales</taxon>
        <taxon>Fabaceae</taxon>
        <taxon>Papilionoideae</taxon>
        <taxon>50 kb inversion clade</taxon>
        <taxon>NPAAA clade</taxon>
        <taxon>Hologalegina</taxon>
        <taxon>IRL clade</taxon>
        <taxon>Trifolieae</taxon>
        <taxon>Medicago</taxon>
    </lineage>
</organism>